<evidence type="ECO:0000255" key="1">
    <source>
        <dbReference type="HAMAP-Rule" id="MF_00159"/>
    </source>
</evidence>
<accession>B8CKR1</accession>
<dbReference type="EC" id="1.17.7.3" evidence="1"/>
<dbReference type="EMBL" id="CP000472">
    <property type="protein sequence ID" value="ACJ28237.1"/>
    <property type="molecule type" value="Genomic_DNA"/>
</dbReference>
<dbReference type="RefSeq" id="WP_020911615.1">
    <property type="nucleotide sequence ID" value="NC_011566.1"/>
</dbReference>
<dbReference type="SMR" id="B8CKR1"/>
<dbReference type="STRING" id="225849.swp_1451"/>
<dbReference type="KEGG" id="swp:swp_1451"/>
<dbReference type="eggNOG" id="COG0821">
    <property type="taxonomic scope" value="Bacteria"/>
</dbReference>
<dbReference type="HOGENOM" id="CLU_042258_0_0_6"/>
<dbReference type="OrthoDB" id="9803214at2"/>
<dbReference type="UniPathway" id="UPA00056">
    <property type="reaction ID" value="UER00096"/>
</dbReference>
<dbReference type="Proteomes" id="UP000000753">
    <property type="component" value="Chromosome"/>
</dbReference>
<dbReference type="GO" id="GO:0051539">
    <property type="term" value="F:4 iron, 4 sulfur cluster binding"/>
    <property type="evidence" value="ECO:0007669"/>
    <property type="project" value="UniProtKB-UniRule"/>
</dbReference>
<dbReference type="GO" id="GO:0046429">
    <property type="term" value="F:4-hydroxy-3-methylbut-2-en-1-yl diphosphate synthase activity (ferredoxin)"/>
    <property type="evidence" value="ECO:0007669"/>
    <property type="project" value="UniProtKB-UniRule"/>
</dbReference>
<dbReference type="GO" id="GO:0141197">
    <property type="term" value="F:4-hydroxy-3-methylbut-2-enyl-diphosphate synthase activity (flavodoxin)"/>
    <property type="evidence" value="ECO:0007669"/>
    <property type="project" value="UniProtKB-EC"/>
</dbReference>
<dbReference type="GO" id="GO:0005506">
    <property type="term" value="F:iron ion binding"/>
    <property type="evidence" value="ECO:0007669"/>
    <property type="project" value="InterPro"/>
</dbReference>
<dbReference type="GO" id="GO:0019288">
    <property type="term" value="P:isopentenyl diphosphate biosynthetic process, methylerythritol 4-phosphate pathway"/>
    <property type="evidence" value="ECO:0007669"/>
    <property type="project" value="UniProtKB-UniRule"/>
</dbReference>
<dbReference type="GO" id="GO:0016114">
    <property type="term" value="P:terpenoid biosynthetic process"/>
    <property type="evidence" value="ECO:0007669"/>
    <property type="project" value="InterPro"/>
</dbReference>
<dbReference type="FunFam" id="3.20.20.20:FF:000001">
    <property type="entry name" value="4-hydroxy-3-methylbut-2-en-1-yl diphosphate synthase (flavodoxin)"/>
    <property type="match status" value="1"/>
</dbReference>
<dbReference type="FunFam" id="3.30.413.10:FF:000002">
    <property type="entry name" value="4-hydroxy-3-methylbut-2-en-1-yl diphosphate synthase (flavodoxin)"/>
    <property type="match status" value="1"/>
</dbReference>
<dbReference type="Gene3D" id="3.20.20.20">
    <property type="entry name" value="Dihydropteroate synthase-like"/>
    <property type="match status" value="1"/>
</dbReference>
<dbReference type="Gene3D" id="3.30.413.10">
    <property type="entry name" value="Sulfite Reductase Hemoprotein, domain 1"/>
    <property type="match status" value="1"/>
</dbReference>
<dbReference type="HAMAP" id="MF_00159">
    <property type="entry name" value="IspG"/>
    <property type="match status" value="1"/>
</dbReference>
<dbReference type="InterPro" id="IPR011005">
    <property type="entry name" value="Dihydropteroate_synth-like_sf"/>
</dbReference>
<dbReference type="InterPro" id="IPR016425">
    <property type="entry name" value="IspG_bac"/>
</dbReference>
<dbReference type="InterPro" id="IPR004588">
    <property type="entry name" value="IspG_bac-typ"/>
</dbReference>
<dbReference type="InterPro" id="IPR045854">
    <property type="entry name" value="NO2/SO3_Rdtase_4Fe4S_sf"/>
</dbReference>
<dbReference type="NCBIfam" id="TIGR00612">
    <property type="entry name" value="ispG_gcpE"/>
    <property type="match status" value="1"/>
</dbReference>
<dbReference type="NCBIfam" id="NF001540">
    <property type="entry name" value="PRK00366.1"/>
    <property type="match status" value="1"/>
</dbReference>
<dbReference type="PANTHER" id="PTHR30454">
    <property type="entry name" value="4-HYDROXY-3-METHYLBUT-2-EN-1-YL DIPHOSPHATE SYNTHASE"/>
    <property type="match status" value="1"/>
</dbReference>
<dbReference type="PANTHER" id="PTHR30454:SF0">
    <property type="entry name" value="4-HYDROXY-3-METHYLBUT-2-EN-1-YL DIPHOSPHATE SYNTHASE (FERREDOXIN), CHLOROPLASTIC"/>
    <property type="match status" value="1"/>
</dbReference>
<dbReference type="Pfam" id="PF04551">
    <property type="entry name" value="GcpE"/>
    <property type="match status" value="1"/>
</dbReference>
<dbReference type="PIRSF" id="PIRSF004640">
    <property type="entry name" value="IspG"/>
    <property type="match status" value="1"/>
</dbReference>
<dbReference type="SUPFAM" id="SSF51717">
    <property type="entry name" value="Dihydropteroate synthetase-like"/>
    <property type="match status" value="1"/>
</dbReference>
<dbReference type="SUPFAM" id="SSF56014">
    <property type="entry name" value="Nitrite and sulphite reductase 4Fe-4S domain-like"/>
    <property type="match status" value="1"/>
</dbReference>
<organism>
    <name type="scientific">Shewanella piezotolerans (strain WP3 / JCM 13877)</name>
    <dbReference type="NCBI Taxonomy" id="225849"/>
    <lineage>
        <taxon>Bacteria</taxon>
        <taxon>Pseudomonadati</taxon>
        <taxon>Pseudomonadota</taxon>
        <taxon>Gammaproteobacteria</taxon>
        <taxon>Alteromonadales</taxon>
        <taxon>Shewanellaceae</taxon>
        <taxon>Shewanella</taxon>
    </lineage>
</organism>
<proteinExistence type="inferred from homology"/>
<reference key="1">
    <citation type="journal article" date="2008" name="PLoS ONE">
        <title>Environmental adaptation: genomic analysis of the piezotolerant and psychrotolerant deep-sea iron reducing bacterium Shewanella piezotolerans WP3.</title>
        <authorList>
            <person name="Wang F."/>
            <person name="Wang J."/>
            <person name="Jian H."/>
            <person name="Zhang B."/>
            <person name="Li S."/>
            <person name="Wang F."/>
            <person name="Zeng X."/>
            <person name="Gao L."/>
            <person name="Bartlett D.H."/>
            <person name="Yu J."/>
            <person name="Hu S."/>
            <person name="Xiao X."/>
        </authorList>
    </citation>
    <scope>NUCLEOTIDE SEQUENCE [LARGE SCALE GENOMIC DNA]</scope>
    <source>
        <strain>WP3 / JCM 13877</strain>
    </source>
</reference>
<feature type="chain" id="PRO_1000191087" description="4-hydroxy-3-methylbut-2-en-1-yl diphosphate synthase (flavodoxin)">
    <location>
        <begin position="1"/>
        <end position="371"/>
    </location>
</feature>
<feature type="binding site" evidence="1">
    <location>
        <position position="270"/>
    </location>
    <ligand>
        <name>[4Fe-4S] cluster</name>
        <dbReference type="ChEBI" id="CHEBI:49883"/>
    </ligand>
</feature>
<feature type="binding site" evidence="1">
    <location>
        <position position="273"/>
    </location>
    <ligand>
        <name>[4Fe-4S] cluster</name>
        <dbReference type="ChEBI" id="CHEBI:49883"/>
    </ligand>
</feature>
<feature type="binding site" evidence="1">
    <location>
        <position position="305"/>
    </location>
    <ligand>
        <name>[4Fe-4S] cluster</name>
        <dbReference type="ChEBI" id="CHEBI:49883"/>
    </ligand>
</feature>
<feature type="binding site" evidence="1">
    <location>
        <position position="312"/>
    </location>
    <ligand>
        <name>[4Fe-4S] cluster</name>
        <dbReference type="ChEBI" id="CHEBI:49883"/>
    </ligand>
</feature>
<keyword id="KW-0004">4Fe-4S</keyword>
<keyword id="KW-0408">Iron</keyword>
<keyword id="KW-0411">Iron-sulfur</keyword>
<keyword id="KW-0414">Isoprene biosynthesis</keyword>
<keyword id="KW-0479">Metal-binding</keyword>
<keyword id="KW-0560">Oxidoreductase</keyword>
<gene>
    <name evidence="1" type="primary">ispG</name>
    <name type="ordered locus">swp_1451</name>
</gene>
<name>ISPG_SHEPW</name>
<protein>
    <recommendedName>
        <fullName evidence="1">4-hydroxy-3-methylbut-2-en-1-yl diphosphate synthase (flavodoxin)</fullName>
        <ecNumber evidence="1">1.17.7.3</ecNumber>
    </recommendedName>
    <alternativeName>
        <fullName evidence="1">1-hydroxy-2-methyl-2-(E)-butenyl 4-diphosphate synthase</fullName>
    </alternativeName>
</protein>
<sequence length="371" mass="40466">MYNESPIIRRKSSRIYVGDVPIGDGAPIAVQSMTNTRTTDVAATVAQIKALENVGADIVRVSVPTMDAAEAFKLIKQQTNVPLVADIHFDYRIALKVAEYGVDCLRINPGNIGNEERIRSVVECARDKNIPIRIGVNGGSLEKELMDKYKEPTPEALLESAMRHVDILDRLNFDQFKVSVKASDVFLAVESYRLLAKQIVQPLHLGITEAGGARAGSVKSAVGLGMLLADGIGDTLRISLAADPVEEIKVGFDILKSLRIRSRGINFIACPSCSRQEFDVISTVNELEQRLEDVVTPMDVSIIGCVVNGPGEALISDIGLTGGNRMSGYYKDGVRQKERFDNNNIVDQLEAKIRAKVAMSESRIPAQDVTK</sequence>
<comment type="function">
    <text evidence="1">Converts 2C-methyl-D-erythritol 2,4-cyclodiphosphate (ME-2,4cPP) into 1-hydroxy-2-methyl-2-(E)-butenyl 4-diphosphate.</text>
</comment>
<comment type="catalytic activity">
    <reaction evidence="1">
        <text>(2E)-4-hydroxy-3-methylbut-2-enyl diphosphate + oxidized [flavodoxin] + H2O + 2 H(+) = 2-C-methyl-D-erythritol 2,4-cyclic diphosphate + reduced [flavodoxin]</text>
        <dbReference type="Rhea" id="RHEA:43604"/>
        <dbReference type="Rhea" id="RHEA-COMP:10622"/>
        <dbReference type="Rhea" id="RHEA-COMP:10623"/>
        <dbReference type="ChEBI" id="CHEBI:15377"/>
        <dbReference type="ChEBI" id="CHEBI:15378"/>
        <dbReference type="ChEBI" id="CHEBI:57618"/>
        <dbReference type="ChEBI" id="CHEBI:58210"/>
        <dbReference type="ChEBI" id="CHEBI:58483"/>
        <dbReference type="ChEBI" id="CHEBI:128753"/>
        <dbReference type="EC" id="1.17.7.3"/>
    </reaction>
</comment>
<comment type="cofactor">
    <cofactor evidence="1">
        <name>[4Fe-4S] cluster</name>
        <dbReference type="ChEBI" id="CHEBI:49883"/>
    </cofactor>
    <text evidence="1">Binds 1 [4Fe-4S] cluster.</text>
</comment>
<comment type="pathway">
    <text evidence="1">Isoprenoid biosynthesis; isopentenyl diphosphate biosynthesis via DXP pathway; isopentenyl diphosphate from 1-deoxy-D-xylulose 5-phosphate: step 5/6.</text>
</comment>
<comment type="similarity">
    <text evidence="1">Belongs to the IspG family.</text>
</comment>